<gene>
    <name evidence="1" type="primary">matK</name>
</gene>
<dbReference type="EMBL" id="AF456374">
    <property type="protein sequence ID" value="AAM46743.1"/>
    <property type="molecule type" value="Genomic_DNA"/>
</dbReference>
<dbReference type="GO" id="GO:0009507">
    <property type="term" value="C:chloroplast"/>
    <property type="evidence" value="ECO:0007669"/>
    <property type="project" value="UniProtKB-SubCell"/>
</dbReference>
<dbReference type="GO" id="GO:0003723">
    <property type="term" value="F:RNA binding"/>
    <property type="evidence" value="ECO:0007669"/>
    <property type="project" value="UniProtKB-KW"/>
</dbReference>
<dbReference type="GO" id="GO:0006397">
    <property type="term" value="P:mRNA processing"/>
    <property type="evidence" value="ECO:0007669"/>
    <property type="project" value="UniProtKB-KW"/>
</dbReference>
<dbReference type="GO" id="GO:0008380">
    <property type="term" value="P:RNA splicing"/>
    <property type="evidence" value="ECO:0007669"/>
    <property type="project" value="UniProtKB-UniRule"/>
</dbReference>
<dbReference type="GO" id="GO:0008033">
    <property type="term" value="P:tRNA processing"/>
    <property type="evidence" value="ECO:0007669"/>
    <property type="project" value="UniProtKB-KW"/>
</dbReference>
<dbReference type="HAMAP" id="MF_01390">
    <property type="entry name" value="MatK"/>
    <property type="match status" value="1"/>
</dbReference>
<dbReference type="InterPro" id="IPR024937">
    <property type="entry name" value="Domain_X"/>
</dbReference>
<dbReference type="InterPro" id="IPR002866">
    <property type="entry name" value="Maturase_MatK"/>
</dbReference>
<dbReference type="InterPro" id="IPR024942">
    <property type="entry name" value="Maturase_MatK_N"/>
</dbReference>
<dbReference type="PANTHER" id="PTHR34811">
    <property type="entry name" value="MATURASE K"/>
    <property type="match status" value="1"/>
</dbReference>
<dbReference type="PANTHER" id="PTHR34811:SF1">
    <property type="entry name" value="MATURASE K"/>
    <property type="match status" value="1"/>
</dbReference>
<dbReference type="Pfam" id="PF01348">
    <property type="entry name" value="Intron_maturas2"/>
    <property type="match status" value="1"/>
</dbReference>
<dbReference type="Pfam" id="PF01824">
    <property type="entry name" value="MatK_N"/>
    <property type="match status" value="1"/>
</dbReference>
<geneLocation type="chloroplast"/>
<accession>Q8MDT1</accession>
<name>MATK_ARAHE</name>
<protein>
    <recommendedName>
        <fullName evidence="1">Maturase K</fullName>
    </recommendedName>
    <alternativeName>
        <fullName evidence="1">Intron maturase</fullName>
    </alternativeName>
</protein>
<keyword id="KW-0150">Chloroplast</keyword>
<keyword id="KW-0507">mRNA processing</keyword>
<keyword id="KW-0934">Plastid</keyword>
<keyword id="KW-0694">RNA-binding</keyword>
<keyword id="KW-0819">tRNA processing</keyword>
<reference key="1">
    <citation type="journal article" date="2002" name="Kew Bull.">
        <title>Familial concepts and relationships in the conifers based on rbcL and matK sequence comparisons.</title>
        <authorList>
            <person name="Quinn C.J."/>
            <person name="Price R.A."/>
            <person name="Gadek P.A."/>
        </authorList>
    </citation>
    <scope>NUCLEOTIDE SEQUENCE [GENOMIC DNA]</scope>
</reference>
<feature type="chain" id="PRO_0000143252" description="Maturase K">
    <location>
        <begin position="1"/>
        <end position="507"/>
    </location>
</feature>
<organism>
    <name type="scientific">Araucaria heterophylla</name>
    <name type="common">Norfolk Island pine</name>
    <dbReference type="NCBI Taxonomy" id="34341"/>
    <lineage>
        <taxon>Eukaryota</taxon>
        <taxon>Viridiplantae</taxon>
        <taxon>Streptophyta</taxon>
        <taxon>Embryophyta</taxon>
        <taxon>Tracheophyta</taxon>
        <taxon>Spermatophyta</taxon>
        <taxon>Pinopsida</taxon>
        <taxon>Pinidae</taxon>
        <taxon>Conifers II</taxon>
        <taxon>Araucariales</taxon>
        <taxon>Araucariaceae</taxon>
        <taxon>Araucaria</taxon>
    </lineage>
</organism>
<comment type="function">
    <text evidence="1">Usually encoded in the trnK tRNA gene intron. Probably assists in splicing its own and other chloroplast group II introns.</text>
</comment>
<comment type="subcellular location">
    <subcellularLocation>
        <location>Plastid</location>
        <location>Chloroplast</location>
    </subcellularLocation>
</comment>
<comment type="similarity">
    <text evidence="1">Belongs to the intron maturase 2 family. MatK subfamily.</text>
</comment>
<proteinExistence type="inferred from homology"/>
<sequence>MNEFQRGGNKHRSWQQCFLYPLFFQEDLYAIAHDYHLDRSSSSEPAENCISNAFSFLTVKRSISRIRQQNESIVLFWNCDRNQWIDRNRSSSSELILEGLVVVLEISFSMRLKHSLEVMNGWKSFRSTHCLFPLMEEKFPHSNYILDIRVPYSIHPEILVRAFRRWIRDAPSLHLLRRILYECQNSSNAENLQKAILVVLRENTKFYLFLWNSYVYECESILVPLLKRSSHSRXXXXXXXXXXXXXXXXXXXXXXXXXXXXXKKIWLLKDPFIPYVRYGERSLIAXKGTHLQVKKCRYHLLNFWQCYFHLWFQPYRVCILELSKNCSSFLGFFLSVKMKSLMVRTKMVDDLLITYIITNEFDAIAPIRSIIGLLAKERFCDISGRPISKLAWTSLSDDDILDRFDRIWRNLFHYYSGSINQDGLYCIKYILLLSCAKTLACKHKTTIRVVREELGSKLFTKSFSKEREFISSFFSKTRSQRERIWHLDILRIIPLANSWQKIQNKKK</sequence>
<evidence type="ECO:0000255" key="1">
    <source>
        <dbReference type="HAMAP-Rule" id="MF_01390"/>
    </source>
</evidence>